<feature type="chain" id="PRO_0000330937" description="Type-1 glutamine synthetase 2">
    <location>
        <begin position="1"/>
        <end position="521"/>
    </location>
</feature>
<feature type="domain" description="GS beta-grasp" evidence="1">
    <location>
        <begin position="76"/>
        <end position="176"/>
    </location>
</feature>
<feature type="domain" description="GS catalytic" evidence="2">
    <location>
        <begin position="183"/>
        <end position="521"/>
    </location>
</feature>
<reference key="1">
    <citation type="journal article" date="2005" name="Nature">
        <title>The genome of the social amoeba Dictyostelium discoideum.</title>
        <authorList>
            <person name="Eichinger L."/>
            <person name="Pachebat J.A."/>
            <person name="Gloeckner G."/>
            <person name="Rajandream M.A."/>
            <person name="Sucgang R."/>
            <person name="Berriman M."/>
            <person name="Song J."/>
            <person name="Olsen R."/>
            <person name="Szafranski K."/>
            <person name="Xu Q."/>
            <person name="Tunggal B."/>
            <person name="Kummerfeld S."/>
            <person name="Madera M."/>
            <person name="Konfortov B.A."/>
            <person name="Rivero F."/>
            <person name="Bankier A.T."/>
            <person name="Lehmann R."/>
            <person name="Hamlin N."/>
            <person name="Davies R."/>
            <person name="Gaudet P."/>
            <person name="Fey P."/>
            <person name="Pilcher K."/>
            <person name="Chen G."/>
            <person name="Saunders D."/>
            <person name="Sodergren E.J."/>
            <person name="Davis P."/>
            <person name="Kerhornou A."/>
            <person name="Nie X."/>
            <person name="Hall N."/>
            <person name="Anjard C."/>
            <person name="Hemphill L."/>
            <person name="Bason N."/>
            <person name="Farbrother P."/>
            <person name="Desany B."/>
            <person name="Just E."/>
            <person name="Morio T."/>
            <person name="Rost R."/>
            <person name="Churcher C.M."/>
            <person name="Cooper J."/>
            <person name="Haydock S."/>
            <person name="van Driessche N."/>
            <person name="Cronin A."/>
            <person name="Goodhead I."/>
            <person name="Muzny D.M."/>
            <person name="Mourier T."/>
            <person name="Pain A."/>
            <person name="Lu M."/>
            <person name="Harper D."/>
            <person name="Lindsay R."/>
            <person name="Hauser H."/>
            <person name="James K.D."/>
            <person name="Quiles M."/>
            <person name="Madan Babu M."/>
            <person name="Saito T."/>
            <person name="Buchrieser C."/>
            <person name="Wardroper A."/>
            <person name="Felder M."/>
            <person name="Thangavelu M."/>
            <person name="Johnson D."/>
            <person name="Knights A."/>
            <person name="Loulseged H."/>
            <person name="Mungall K.L."/>
            <person name="Oliver K."/>
            <person name="Price C."/>
            <person name="Quail M.A."/>
            <person name="Urushihara H."/>
            <person name="Hernandez J."/>
            <person name="Rabbinowitsch E."/>
            <person name="Steffen D."/>
            <person name="Sanders M."/>
            <person name="Ma J."/>
            <person name="Kohara Y."/>
            <person name="Sharp S."/>
            <person name="Simmonds M.N."/>
            <person name="Spiegler S."/>
            <person name="Tivey A."/>
            <person name="Sugano S."/>
            <person name="White B."/>
            <person name="Walker D."/>
            <person name="Woodward J.R."/>
            <person name="Winckler T."/>
            <person name="Tanaka Y."/>
            <person name="Shaulsky G."/>
            <person name="Schleicher M."/>
            <person name="Weinstock G.M."/>
            <person name="Rosenthal A."/>
            <person name="Cox E.C."/>
            <person name="Chisholm R.L."/>
            <person name="Gibbs R.A."/>
            <person name="Loomis W.F."/>
            <person name="Platzer M."/>
            <person name="Kay R.R."/>
            <person name="Williams J.G."/>
            <person name="Dear P.H."/>
            <person name="Noegel A.A."/>
            <person name="Barrell B.G."/>
            <person name="Kuspa A."/>
        </authorList>
    </citation>
    <scope>NUCLEOTIDE SEQUENCE [LARGE SCALE GENOMIC DNA]</scope>
    <source>
        <strain>AX4</strain>
    </source>
</reference>
<reference key="2">
    <citation type="submission" date="2010-01" db="UniProtKB">
        <authorList>
            <person name="Bienvenut W.V."/>
            <person name="Veltman D.M."/>
            <person name="Insall R.H."/>
        </authorList>
    </citation>
    <scope>PROTEIN SEQUENCE OF 88-98; 280-289 AND 468-478</scope>
    <scope>IDENTIFICATION BY MASS SPECTROMETRY</scope>
</reference>
<accession>P0C7B6</accession>
<accession>C7G063</accession>
<dbReference type="EC" id="6.3.1.2"/>
<dbReference type="EMBL" id="AAFI02000135">
    <property type="protein sequence ID" value="EEU04062.1"/>
    <property type="molecule type" value="Genomic_DNA"/>
</dbReference>
<dbReference type="RefSeq" id="XP_002649114.1">
    <property type="nucleotide sequence ID" value="XM_002649068.1"/>
</dbReference>
<dbReference type="SMR" id="P0C7B6"/>
<dbReference type="FunCoup" id="P0C7B6">
    <property type="interactions" value="88"/>
</dbReference>
<dbReference type="STRING" id="44689.P0C7B6"/>
<dbReference type="PaxDb" id="44689-DDB0252590"/>
<dbReference type="EnsemblProtists" id="EEU04062">
    <property type="protein sequence ID" value="EEU04062"/>
    <property type="gene ID" value="DDB_G0295755"/>
</dbReference>
<dbReference type="GeneID" id="8627058"/>
<dbReference type="KEGG" id="ddi:DDB_G0295755"/>
<dbReference type="dictyBase" id="DDB_G0295755">
    <property type="gene designation" value="glnA2"/>
</dbReference>
<dbReference type="VEuPathDB" id="AmoebaDB:DDB_G0295755"/>
<dbReference type="eggNOG" id="KOG0683">
    <property type="taxonomic scope" value="Eukaryota"/>
</dbReference>
<dbReference type="HOGENOM" id="CLU_017290_0_1_1"/>
<dbReference type="InParanoid" id="P0C7B6"/>
<dbReference type="OMA" id="NIMTFRL"/>
<dbReference type="PhylomeDB" id="P0C7B6"/>
<dbReference type="PRO" id="PR:P0C7B6"/>
<dbReference type="Proteomes" id="UP000002195">
    <property type="component" value="Chromosome 5"/>
</dbReference>
<dbReference type="GO" id="GO:0005524">
    <property type="term" value="F:ATP binding"/>
    <property type="evidence" value="ECO:0007669"/>
    <property type="project" value="UniProtKB-KW"/>
</dbReference>
<dbReference type="GO" id="GO:0004356">
    <property type="term" value="F:glutamine synthetase activity"/>
    <property type="evidence" value="ECO:0007669"/>
    <property type="project" value="UniProtKB-EC"/>
</dbReference>
<dbReference type="GO" id="GO:0006542">
    <property type="term" value="P:glutamine biosynthetic process"/>
    <property type="evidence" value="ECO:0007669"/>
    <property type="project" value="InterPro"/>
</dbReference>
<dbReference type="FunFam" id="3.30.590.10:FF:000005">
    <property type="entry name" value="Probable glutamine synthetase"/>
    <property type="match status" value="1"/>
</dbReference>
<dbReference type="Gene3D" id="3.10.20.70">
    <property type="entry name" value="Glutamine synthetase, N-terminal domain"/>
    <property type="match status" value="1"/>
</dbReference>
<dbReference type="Gene3D" id="3.30.590.10">
    <property type="entry name" value="Glutamine synthetase/guanido kinase, catalytic domain"/>
    <property type="match status" value="1"/>
</dbReference>
<dbReference type="InterPro" id="IPR008147">
    <property type="entry name" value="Gln_synt_N"/>
</dbReference>
<dbReference type="InterPro" id="IPR036651">
    <property type="entry name" value="Gln_synt_N_sf"/>
</dbReference>
<dbReference type="InterPro" id="IPR014746">
    <property type="entry name" value="Gln_synth/guanido_kin_cat_dom"/>
</dbReference>
<dbReference type="InterPro" id="IPR008146">
    <property type="entry name" value="Gln_synth_cat_dom"/>
</dbReference>
<dbReference type="PANTHER" id="PTHR43785">
    <property type="entry name" value="GAMMA-GLUTAMYLPUTRESCINE SYNTHETASE"/>
    <property type="match status" value="1"/>
</dbReference>
<dbReference type="PANTHER" id="PTHR43785:SF12">
    <property type="entry name" value="TYPE-1 GLUTAMINE SYNTHETASE 2"/>
    <property type="match status" value="1"/>
</dbReference>
<dbReference type="Pfam" id="PF00120">
    <property type="entry name" value="Gln-synt_C"/>
    <property type="match status" value="1"/>
</dbReference>
<dbReference type="SMART" id="SM01230">
    <property type="entry name" value="Gln-synt_C"/>
    <property type="match status" value="1"/>
</dbReference>
<dbReference type="SUPFAM" id="SSF54368">
    <property type="entry name" value="Glutamine synthetase, N-terminal domain"/>
    <property type="match status" value="1"/>
</dbReference>
<dbReference type="SUPFAM" id="SSF55931">
    <property type="entry name" value="Glutamine synthetase/guanido kinase"/>
    <property type="match status" value="1"/>
</dbReference>
<dbReference type="PROSITE" id="PS51986">
    <property type="entry name" value="GS_BETA_GRASP"/>
    <property type="match status" value="1"/>
</dbReference>
<dbReference type="PROSITE" id="PS51987">
    <property type="entry name" value="GS_CATALYTIC"/>
    <property type="match status" value="1"/>
</dbReference>
<keyword id="KW-0067">ATP-binding</keyword>
<keyword id="KW-0903">Direct protein sequencing</keyword>
<keyword id="KW-0436">Ligase</keyword>
<keyword id="KW-0547">Nucleotide-binding</keyword>
<keyword id="KW-1185">Reference proteome</keyword>
<name>GLNA2_DICDI</name>
<sequence length="521" mass="59201">MNKLVNKNIFINKNNSLKNFVNNYSTKTNNNNNNIFNKNKNDLKSFSSSSKLNNNNNNNNKYEESKLMNAEDLILNQIKISKSPFVKIAGSDIDGILRGKYLDKSKFESSIKKGLGFCSVIFGWDSSDSAYDNVKFTGNHTGYPDMGARPDLSTFRTIPWEYDVPLFLMDFIGTNGEPLPICPRSTLKKVIKKCHEHQFDPVQGMEFEWYNYSENNKSLLNKNFSNLEPLSNGMFGYSLLRTSQNSEFMNSLAELQGFGVPLEGLHTETGPGVYEAAIRFSTALESADRAILFKHCTKEIASLQGIMASFMAKPFKDLPGCSGHMHQNFNCLKTGKNLFLDESDPNHMSDIFKSFVAGQLLLLPEFLPFFAPTINSYKRLVDGYWAPTTPTWGMDNRTVALRIIKGGKATRSEFRVTGSDVNPYISIAASFAAGLYGVINKLELKQKPIIGNSYDLYKKGLVERLPRSLAESTELLSKSKIAKEYLGEEFVDHFVETRRWEYRQFNHQVHKWELERYLEII</sequence>
<comment type="catalytic activity">
    <reaction>
        <text>L-glutamate + NH4(+) + ATP = L-glutamine + ADP + phosphate + H(+)</text>
        <dbReference type="Rhea" id="RHEA:16169"/>
        <dbReference type="ChEBI" id="CHEBI:15378"/>
        <dbReference type="ChEBI" id="CHEBI:28938"/>
        <dbReference type="ChEBI" id="CHEBI:29985"/>
        <dbReference type="ChEBI" id="CHEBI:30616"/>
        <dbReference type="ChEBI" id="CHEBI:43474"/>
        <dbReference type="ChEBI" id="CHEBI:58359"/>
        <dbReference type="ChEBI" id="CHEBI:456216"/>
        <dbReference type="EC" id="6.3.1.2"/>
    </reaction>
</comment>
<comment type="similarity">
    <text evidence="3">Belongs to the glutamine synthetase family.</text>
</comment>
<proteinExistence type="evidence at protein level"/>
<evidence type="ECO:0000255" key="1">
    <source>
        <dbReference type="PROSITE-ProRule" id="PRU01330"/>
    </source>
</evidence>
<evidence type="ECO:0000255" key="2">
    <source>
        <dbReference type="PROSITE-ProRule" id="PRU01331"/>
    </source>
</evidence>
<evidence type="ECO:0000305" key="3"/>
<protein>
    <recommendedName>
        <fullName>Type-1 glutamine synthetase 2</fullName>
        <shortName>Type-1 GS 2</shortName>
        <ecNumber>6.3.1.2</ecNumber>
    </recommendedName>
    <alternativeName>
        <fullName>Type-1 glutamate--ammonia ligase 2</fullName>
    </alternativeName>
</protein>
<organism>
    <name type="scientific">Dictyostelium discoideum</name>
    <name type="common">Social amoeba</name>
    <dbReference type="NCBI Taxonomy" id="44689"/>
    <lineage>
        <taxon>Eukaryota</taxon>
        <taxon>Amoebozoa</taxon>
        <taxon>Evosea</taxon>
        <taxon>Eumycetozoa</taxon>
        <taxon>Dictyostelia</taxon>
        <taxon>Dictyosteliales</taxon>
        <taxon>Dictyosteliaceae</taxon>
        <taxon>Dictyostelium</taxon>
    </lineage>
</organism>
<gene>
    <name type="primary">glnA2</name>
    <name type="ORF">DDB_G0295755</name>
</gene>